<reference key="1">
    <citation type="journal article" date="2009" name="ISME J.">
        <title>The genome sequence of the psychrophilic archaeon, Methanococcoides burtonii: the role of genome evolution in cold adaptation.</title>
        <authorList>
            <person name="Allen M.A."/>
            <person name="Lauro F.M."/>
            <person name="Williams T.J."/>
            <person name="Burg D."/>
            <person name="Siddiqui K.S."/>
            <person name="De Francisci D."/>
            <person name="Chong K.W."/>
            <person name="Pilak O."/>
            <person name="Chew H.H."/>
            <person name="De Maere M.Z."/>
            <person name="Ting L."/>
            <person name="Katrib M."/>
            <person name="Ng C."/>
            <person name="Sowers K.R."/>
            <person name="Galperin M.Y."/>
            <person name="Anderson I.J."/>
            <person name="Ivanova N."/>
            <person name="Dalin E."/>
            <person name="Martinez M."/>
            <person name="Lapidus A."/>
            <person name="Hauser L."/>
            <person name="Land M."/>
            <person name="Thomas T."/>
            <person name="Cavicchioli R."/>
        </authorList>
    </citation>
    <scope>NUCLEOTIDE SEQUENCE [LARGE SCALE GENOMIC DNA]</scope>
    <source>
        <strain>DSM 6242 / NBRC 107633 / OCM 468 / ACE-M</strain>
    </source>
</reference>
<feature type="chain" id="PRO_1000052438" description="Large ribosomal subunit protein uL4">
    <location>
        <begin position="1"/>
        <end position="253"/>
    </location>
</feature>
<accession>Q12ZV0</accession>
<sequence length="253" mass="27301">MTTANIIDLSGNSKGEIALPEVFSEIFRPDLIKKAVLSAQANRLQPYGTKLYAGMQTSAHSWGSGRGVAQVPRISNGSRVARIPQAVGGRRAHPPKTETDRTEKINKKEKRLAVRSAIAATIDADLVKARGHKFTAEVPFVADDAIEGLVKIKEVISFLQAAGLYDDIIRAKEGKHIRAGKGKRRGRKYKNRKSVLIVTGEESLLSKAANNLPGVDVATVTALNAELLAPGTHAGRLTVWTQSAITNMEGMFL</sequence>
<evidence type="ECO:0000255" key="1">
    <source>
        <dbReference type="HAMAP-Rule" id="MF_01328"/>
    </source>
</evidence>
<evidence type="ECO:0000305" key="2"/>
<dbReference type="EMBL" id="CP000300">
    <property type="protein sequence ID" value="ABE51026.1"/>
    <property type="molecule type" value="Genomic_DNA"/>
</dbReference>
<dbReference type="RefSeq" id="WP_011498190.1">
    <property type="nucleotide sequence ID" value="NC_007955.1"/>
</dbReference>
<dbReference type="SMR" id="Q12ZV0"/>
<dbReference type="STRING" id="259564.Mbur_0002"/>
<dbReference type="GeneID" id="3996832"/>
<dbReference type="KEGG" id="mbu:Mbur_0002"/>
<dbReference type="HOGENOM" id="CLU_026535_0_0_2"/>
<dbReference type="OrthoDB" id="10737at2157"/>
<dbReference type="Proteomes" id="UP000001979">
    <property type="component" value="Chromosome"/>
</dbReference>
<dbReference type="GO" id="GO:1990904">
    <property type="term" value="C:ribonucleoprotein complex"/>
    <property type="evidence" value="ECO:0007669"/>
    <property type="project" value="UniProtKB-KW"/>
</dbReference>
<dbReference type="GO" id="GO:0005840">
    <property type="term" value="C:ribosome"/>
    <property type="evidence" value="ECO:0007669"/>
    <property type="project" value="UniProtKB-KW"/>
</dbReference>
<dbReference type="GO" id="GO:0019843">
    <property type="term" value="F:rRNA binding"/>
    <property type="evidence" value="ECO:0007669"/>
    <property type="project" value="UniProtKB-UniRule"/>
</dbReference>
<dbReference type="GO" id="GO:0003735">
    <property type="term" value="F:structural constituent of ribosome"/>
    <property type="evidence" value="ECO:0007669"/>
    <property type="project" value="InterPro"/>
</dbReference>
<dbReference type="GO" id="GO:0006412">
    <property type="term" value="P:translation"/>
    <property type="evidence" value="ECO:0007669"/>
    <property type="project" value="UniProtKB-UniRule"/>
</dbReference>
<dbReference type="Gene3D" id="3.40.1370.10">
    <property type="match status" value="1"/>
</dbReference>
<dbReference type="HAMAP" id="MF_01328_A">
    <property type="entry name" value="Ribosomal_uL4_A"/>
    <property type="match status" value="1"/>
</dbReference>
<dbReference type="InterPro" id="IPR002136">
    <property type="entry name" value="Ribosomal_uL4"/>
</dbReference>
<dbReference type="InterPro" id="IPR023574">
    <property type="entry name" value="Ribosomal_uL4_dom_sf"/>
</dbReference>
<dbReference type="InterPro" id="IPR013000">
    <property type="entry name" value="Ribosomal_uL4_euk/arc_CS"/>
</dbReference>
<dbReference type="InterPro" id="IPR045240">
    <property type="entry name" value="Ribosomal_uL4_euk/arch"/>
</dbReference>
<dbReference type="InterPro" id="IPR019970">
    <property type="entry name" value="Ribosomall_uL4-arc"/>
</dbReference>
<dbReference type="NCBIfam" id="TIGR03672">
    <property type="entry name" value="rpl4p_arch"/>
    <property type="match status" value="1"/>
</dbReference>
<dbReference type="PANTHER" id="PTHR19431">
    <property type="entry name" value="60S RIBOSOMAL PROTEIN L4"/>
    <property type="match status" value="1"/>
</dbReference>
<dbReference type="Pfam" id="PF00573">
    <property type="entry name" value="Ribosomal_L4"/>
    <property type="match status" value="1"/>
</dbReference>
<dbReference type="SUPFAM" id="SSF52166">
    <property type="entry name" value="Ribosomal protein L4"/>
    <property type="match status" value="1"/>
</dbReference>
<dbReference type="PROSITE" id="PS00939">
    <property type="entry name" value="RIBOSOMAL_L1E"/>
    <property type="match status" value="1"/>
</dbReference>
<organism>
    <name type="scientific">Methanococcoides burtonii (strain DSM 6242 / NBRC 107633 / OCM 468 / ACE-M)</name>
    <dbReference type="NCBI Taxonomy" id="259564"/>
    <lineage>
        <taxon>Archaea</taxon>
        <taxon>Methanobacteriati</taxon>
        <taxon>Methanobacteriota</taxon>
        <taxon>Stenosarchaea group</taxon>
        <taxon>Methanomicrobia</taxon>
        <taxon>Methanosarcinales</taxon>
        <taxon>Methanosarcinaceae</taxon>
        <taxon>Methanococcoides</taxon>
    </lineage>
</organism>
<protein>
    <recommendedName>
        <fullName evidence="1">Large ribosomal subunit protein uL4</fullName>
    </recommendedName>
    <alternativeName>
        <fullName evidence="2">50S ribosomal protein L4</fullName>
    </alternativeName>
</protein>
<proteinExistence type="inferred from homology"/>
<comment type="function">
    <text evidence="1">One of the primary rRNA binding proteins, this protein initially binds near the 5'-end of the 23S rRNA. It is important during the early stages of 50S assembly. It makes multiple contacts with different domains of the 23S rRNA in the assembled 50S subunit and ribosome.</text>
</comment>
<comment type="function">
    <text evidence="1">Forms part of the polypeptide exit tunnel.</text>
</comment>
<comment type="subunit">
    <text evidence="1">Part of the 50S ribosomal subunit.</text>
</comment>
<comment type="similarity">
    <text evidence="1">Belongs to the universal ribosomal protein uL4 family.</text>
</comment>
<keyword id="KW-0687">Ribonucleoprotein</keyword>
<keyword id="KW-0689">Ribosomal protein</keyword>
<keyword id="KW-0694">RNA-binding</keyword>
<keyword id="KW-0699">rRNA-binding</keyword>
<name>RL4_METBU</name>
<gene>
    <name evidence="1" type="primary">rpl4</name>
    <name type="ordered locus">Mbur_0002</name>
</gene>